<accession>A1TQ53</accession>
<feature type="chain" id="PRO_0000381166" description="Biotin synthase">
    <location>
        <begin position="1"/>
        <end position="354"/>
    </location>
</feature>
<feature type="domain" description="Radical SAM core" evidence="2">
    <location>
        <begin position="64"/>
        <end position="282"/>
    </location>
</feature>
<feature type="binding site" evidence="1">
    <location>
        <position position="79"/>
    </location>
    <ligand>
        <name>[4Fe-4S] cluster</name>
        <dbReference type="ChEBI" id="CHEBI:49883"/>
        <note>4Fe-4S-S-AdoMet</note>
    </ligand>
</feature>
<feature type="binding site" evidence="1">
    <location>
        <position position="83"/>
    </location>
    <ligand>
        <name>[4Fe-4S] cluster</name>
        <dbReference type="ChEBI" id="CHEBI:49883"/>
        <note>4Fe-4S-S-AdoMet</note>
    </ligand>
</feature>
<feature type="binding site" evidence="1">
    <location>
        <position position="86"/>
    </location>
    <ligand>
        <name>[4Fe-4S] cluster</name>
        <dbReference type="ChEBI" id="CHEBI:49883"/>
        <note>4Fe-4S-S-AdoMet</note>
    </ligand>
</feature>
<feature type="binding site" evidence="1">
    <location>
        <position position="123"/>
    </location>
    <ligand>
        <name>[2Fe-2S] cluster</name>
        <dbReference type="ChEBI" id="CHEBI:190135"/>
    </ligand>
</feature>
<feature type="binding site" evidence="1">
    <location>
        <position position="154"/>
    </location>
    <ligand>
        <name>[2Fe-2S] cluster</name>
        <dbReference type="ChEBI" id="CHEBI:190135"/>
    </ligand>
</feature>
<feature type="binding site" evidence="1">
    <location>
        <position position="214"/>
    </location>
    <ligand>
        <name>[2Fe-2S] cluster</name>
        <dbReference type="ChEBI" id="CHEBI:190135"/>
    </ligand>
</feature>
<feature type="binding site" evidence="1">
    <location>
        <position position="286"/>
    </location>
    <ligand>
        <name>[2Fe-2S] cluster</name>
        <dbReference type="ChEBI" id="CHEBI:190135"/>
    </ligand>
</feature>
<organism>
    <name type="scientific">Paracidovorax citrulli (strain AAC00-1)</name>
    <name type="common">Acidovorax citrulli</name>
    <dbReference type="NCBI Taxonomy" id="397945"/>
    <lineage>
        <taxon>Bacteria</taxon>
        <taxon>Pseudomonadati</taxon>
        <taxon>Pseudomonadota</taxon>
        <taxon>Betaproteobacteria</taxon>
        <taxon>Burkholderiales</taxon>
        <taxon>Comamonadaceae</taxon>
        <taxon>Paracidovorax</taxon>
    </lineage>
</organism>
<sequence>MTATLSDIRPEAPAVPVQLHRPARTPAPAAGTWSVQAVQELLDLPFMELLWRAQSVHREHWPAGDVELATLLSVKTGGCPENCGYCPQSAEFDTGVKAQKLMSVDEVTTAARAARDAGATRFCMGAAWRAPKDRDIEKVGELIAAVKGLGMQTCATLGMLEPHQAQALKGAGLDYYNHNLDTAPEYYTDVVSTRAYQERLDTLRHVREAGISVCCGGIIGMGEAPVHRAGLIAQLANLDPYPESVPINSLVRVPGTPLADSDPVDPLDFVRVIAVARITMPRARVRLSAGRQQMGDAVQALCFLAGANSIFYGDKLLVTGNPDVDADVQLLAKLGMNGRQVASTEPHDLHHHAP</sequence>
<gene>
    <name evidence="1" type="primary">bioB</name>
    <name type="ordered locus">Aave_2518</name>
</gene>
<reference key="1">
    <citation type="submission" date="2006-12" db="EMBL/GenBank/DDBJ databases">
        <title>Complete sequence of Acidovorax avenae subsp. citrulli AAC00-1.</title>
        <authorList>
            <person name="Copeland A."/>
            <person name="Lucas S."/>
            <person name="Lapidus A."/>
            <person name="Barry K."/>
            <person name="Detter J.C."/>
            <person name="Glavina del Rio T."/>
            <person name="Dalin E."/>
            <person name="Tice H."/>
            <person name="Pitluck S."/>
            <person name="Kiss H."/>
            <person name="Brettin T."/>
            <person name="Bruce D."/>
            <person name="Han C."/>
            <person name="Tapia R."/>
            <person name="Gilna P."/>
            <person name="Schmutz J."/>
            <person name="Larimer F."/>
            <person name="Land M."/>
            <person name="Hauser L."/>
            <person name="Kyrpides N."/>
            <person name="Kim E."/>
            <person name="Stahl D."/>
            <person name="Richardson P."/>
        </authorList>
    </citation>
    <scope>NUCLEOTIDE SEQUENCE [LARGE SCALE GENOMIC DNA]</scope>
    <source>
        <strain>AAC00-1</strain>
    </source>
</reference>
<proteinExistence type="inferred from homology"/>
<protein>
    <recommendedName>
        <fullName evidence="1">Biotin synthase</fullName>
        <ecNumber evidence="1">2.8.1.6</ecNumber>
    </recommendedName>
</protein>
<name>BIOB_PARC0</name>
<evidence type="ECO:0000255" key="1">
    <source>
        <dbReference type="HAMAP-Rule" id="MF_01694"/>
    </source>
</evidence>
<evidence type="ECO:0000255" key="2">
    <source>
        <dbReference type="PROSITE-ProRule" id="PRU01266"/>
    </source>
</evidence>
<keyword id="KW-0001">2Fe-2S</keyword>
<keyword id="KW-0004">4Fe-4S</keyword>
<keyword id="KW-0093">Biotin biosynthesis</keyword>
<keyword id="KW-0408">Iron</keyword>
<keyword id="KW-0411">Iron-sulfur</keyword>
<keyword id="KW-0479">Metal-binding</keyword>
<keyword id="KW-0949">S-adenosyl-L-methionine</keyword>
<keyword id="KW-0808">Transferase</keyword>
<comment type="function">
    <text evidence="1">Catalyzes the conversion of dethiobiotin (DTB) to biotin by the insertion of a sulfur atom into dethiobiotin via a radical-based mechanism.</text>
</comment>
<comment type="catalytic activity">
    <reaction evidence="1">
        <text>(4R,5S)-dethiobiotin + (sulfur carrier)-SH + 2 reduced [2Fe-2S]-[ferredoxin] + 2 S-adenosyl-L-methionine = (sulfur carrier)-H + biotin + 2 5'-deoxyadenosine + 2 L-methionine + 2 oxidized [2Fe-2S]-[ferredoxin]</text>
        <dbReference type="Rhea" id="RHEA:22060"/>
        <dbReference type="Rhea" id="RHEA-COMP:10000"/>
        <dbReference type="Rhea" id="RHEA-COMP:10001"/>
        <dbReference type="Rhea" id="RHEA-COMP:14737"/>
        <dbReference type="Rhea" id="RHEA-COMP:14739"/>
        <dbReference type="ChEBI" id="CHEBI:17319"/>
        <dbReference type="ChEBI" id="CHEBI:29917"/>
        <dbReference type="ChEBI" id="CHEBI:33737"/>
        <dbReference type="ChEBI" id="CHEBI:33738"/>
        <dbReference type="ChEBI" id="CHEBI:57586"/>
        <dbReference type="ChEBI" id="CHEBI:57844"/>
        <dbReference type="ChEBI" id="CHEBI:59789"/>
        <dbReference type="ChEBI" id="CHEBI:64428"/>
        <dbReference type="ChEBI" id="CHEBI:149473"/>
        <dbReference type="EC" id="2.8.1.6"/>
    </reaction>
</comment>
<comment type="cofactor">
    <cofactor evidence="1">
        <name>[4Fe-4S] cluster</name>
        <dbReference type="ChEBI" id="CHEBI:49883"/>
    </cofactor>
    <text evidence="1">Binds 1 [4Fe-4S] cluster. The cluster is coordinated with 3 cysteines and an exchangeable S-adenosyl-L-methionine.</text>
</comment>
<comment type="cofactor">
    <cofactor evidence="1">
        <name>[2Fe-2S] cluster</name>
        <dbReference type="ChEBI" id="CHEBI:190135"/>
    </cofactor>
    <text evidence="1">Binds 1 [2Fe-2S] cluster. The cluster is coordinated with 3 cysteines and 1 arginine.</text>
</comment>
<comment type="pathway">
    <text evidence="1">Cofactor biosynthesis; biotin biosynthesis; biotin from 7,8-diaminononanoate: step 2/2.</text>
</comment>
<comment type="subunit">
    <text evidence="1">Homodimer.</text>
</comment>
<comment type="similarity">
    <text evidence="1">Belongs to the radical SAM superfamily. Biotin synthase family.</text>
</comment>
<dbReference type="EC" id="2.8.1.6" evidence="1"/>
<dbReference type="EMBL" id="CP000512">
    <property type="protein sequence ID" value="ABM33091.1"/>
    <property type="molecule type" value="Genomic_DNA"/>
</dbReference>
<dbReference type="RefSeq" id="WP_011795618.1">
    <property type="nucleotide sequence ID" value="NC_008752.1"/>
</dbReference>
<dbReference type="SMR" id="A1TQ53"/>
<dbReference type="STRING" id="397945.Aave_2518"/>
<dbReference type="GeneID" id="79792097"/>
<dbReference type="KEGG" id="aav:Aave_2518"/>
<dbReference type="eggNOG" id="COG0502">
    <property type="taxonomic scope" value="Bacteria"/>
</dbReference>
<dbReference type="HOGENOM" id="CLU_033172_1_2_4"/>
<dbReference type="OrthoDB" id="9786826at2"/>
<dbReference type="UniPathway" id="UPA00078">
    <property type="reaction ID" value="UER00162"/>
</dbReference>
<dbReference type="Proteomes" id="UP000002596">
    <property type="component" value="Chromosome"/>
</dbReference>
<dbReference type="GO" id="GO:0051537">
    <property type="term" value="F:2 iron, 2 sulfur cluster binding"/>
    <property type="evidence" value="ECO:0007669"/>
    <property type="project" value="UniProtKB-KW"/>
</dbReference>
<dbReference type="GO" id="GO:0051539">
    <property type="term" value="F:4 iron, 4 sulfur cluster binding"/>
    <property type="evidence" value="ECO:0007669"/>
    <property type="project" value="UniProtKB-KW"/>
</dbReference>
<dbReference type="GO" id="GO:0004076">
    <property type="term" value="F:biotin synthase activity"/>
    <property type="evidence" value="ECO:0007669"/>
    <property type="project" value="UniProtKB-UniRule"/>
</dbReference>
<dbReference type="GO" id="GO:0005506">
    <property type="term" value="F:iron ion binding"/>
    <property type="evidence" value="ECO:0007669"/>
    <property type="project" value="UniProtKB-UniRule"/>
</dbReference>
<dbReference type="GO" id="GO:0009102">
    <property type="term" value="P:biotin biosynthetic process"/>
    <property type="evidence" value="ECO:0007669"/>
    <property type="project" value="UniProtKB-UniRule"/>
</dbReference>
<dbReference type="CDD" id="cd01335">
    <property type="entry name" value="Radical_SAM"/>
    <property type="match status" value="1"/>
</dbReference>
<dbReference type="Gene3D" id="3.20.20.70">
    <property type="entry name" value="Aldolase class I"/>
    <property type="match status" value="1"/>
</dbReference>
<dbReference type="HAMAP" id="MF_01694">
    <property type="entry name" value="BioB"/>
    <property type="match status" value="1"/>
</dbReference>
<dbReference type="InterPro" id="IPR013785">
    <property type="entry name" value="Aldolase_TIM"/>
</dbReference>
<dbReference type="InterPro" id="IPR010722">
    <property type="entry name" value="BATS_dom"/>
</dbReference>
<dbReference type="InterPro" id="IPR002684">
    <property type="entry name" value="Biotin_synth/BioAB"/>
</dbReference>
<dbReference type="InterPro" id="IPR024177">
    <property type="entry name" value="Biotin_synthase"/>
</dbReference>
<dbReference type="InterPro" id="IPR006638">
    <property type="entry name" value="Elp3/MiaA/NifB-like_rSAM"/>
</dbReference>
<dbReference type="InterPro" id="IPR007197">
    <property type="entry name" value="rSAM"/>
</dbReference>
<dbReference type="NCBIfam" id="TIGR00433">
    <property type="entry name" value="bioB"/>
    <property type="match status" value="1"/>
</dbReference>
<dbReference type="PANTHER" id="PTHR22976">
    <property type="entry name" value="BIOTIN SYNTHASE"/>
    <property type="match status" value="1"/>
</dbReference>
<dbReference type="PANTHER" id="PTHR22976:SF2">
    <property type="entry name" value="BIOTIN SYNTHASE, MITOCHONDRIAL"/>
    <property type="match status" value="1"/>
</dbReference>
<dbReference type="Pfam" id="PF06968">
    <property type="entry name" value="BATS"/>
    <property type="match status" value="1"/>
</dbReference>
<dbReference type="Pfam" id="PF04055">
    <property type="entry name" value="Radical_SAM"/>
    <property type="match status" value="1"/>
</dbReference>
<dbReference type="PIRSF" id="PIRSF001619">
    <property type="entry name" value="Biotin_synth"/>
    <property type="match status" value="1"/>
</dbReference>
<dbReference type="SFLD" id="SFLDF00272">
    <property type="entry name" value="biotin_synthase"/>
    <property type="match status" value="1"/>
</dbReference>
<dbReference type="SFLD" id="SFLDG01278">
    <property type="entry name" value="biotin_synthase_like"/>
    <property type="match status" value="1"/>
</dbReference>
<dbReference type="SMART" id="SM00876">
    <property type="entry name" value="BATS"/>
    <property type="match status" value="1"/>
</dbReference>
<dbReference type="SMART" id="SM00729">
    <property type="entry name" value="Elp3"/>
    <property type="match status" value="1"/>
</dbReference>
<dbReference type="SUPFAM" id="SSF102114">
    <property type="entry name" value="Radical SAM enzymes"/>
    <property type="match status" value="1"/>
</dbReference>
<dbReference type="PROSITE" id="PS51918">
    <property type="entry name" value="RADICAL_SAM"/>
    <property type="match status" value="1"/>
</dbReference>